<comment type="similarity">
    <text evidence="1">Belongs to the bacterial ribosomal protein bL28 family.</text>
</comment>
<reference key="1">
    <citation type="journal article" date="2006" name="Proc. Natl. Acad. Sci. U.S.A.">
        <title>Comparative genomics of the lactic acid bacteria.</title>
        <authorList>
            <person name="Makarova K.S."/>
            <person name="Slesarev A."/>
            <person name="Wolf Y.I."/>
            <person name="Sorokin A."/>
            <person name="Mirkin B."/>
            <person name="Koonin E.V."/>
            <person name="Pavlov A."/>
            <person name="Pavlova N."/>
            <person name="Karamychev V."/>
            <person name="Polouchine N."/>
            <person name="Shakhova V."/>
            <person name="Grigoriev I."/>
            <person name="Lou Y."/>
            <person name="Rohksar D."/>
            <person name="Lucas S."/>
            <person name="Huang K."/>
            <person name="Goodstein D.M."/>
            <person name="Hawkins T."/>
            <person name="Plengvidhya V."/>
            <person name="Welker D."/>
            <person name="Hughes J."/>
            <person name="Goh Y."/>
            <person name="Benson A."/>
            <person name="Baldwin K."/>
            <person name="Lee J.-H."/>
            <person name="Diaz-Muniz I."/>
            <person name="Dosti B."/>
            <person name="Smeianov V."/>
            <person name="Wechter W."/>
            <person name="Barabote R."/>
            <person name="Lorca G."/>
            <person name="Altermann E."/>
            <person name="Barrangou R."/>
            <person name="Ganesan B."/>
            <person name="Xie Y."/>
            <person name="Rawsthorne H."/>
            <person name="Tamir D."/>
            <person name="Parker C."/>
            <person name="Breidt F."/>
            <person name="Broadbent J.R."/>
            <person name="Hutkins R."/>
            <person name="O'Sullivan D."/>
            <person name="Steele J."/>
            <person name="Unlu G."/>
            <person name="Saier M.H. Jr."/>
            <person name="Klaenhammer T."/>
            <person name="Richardson P."/>
            <person name="Kozyavkin S."/>
            <person name="Weimer B.C."/>
            <person name="Mills D.A."/>
        </authorList>
    </citation>
    <scope>NUCLEOTIDE SEQUENCE [LARGE SCALE GENOMIC DNA]</scope>
    <source>
        <strain>ATCC 334 / BCRC 17002 / CCUG 31169 / CIP 107868 / KCTC 3260 / NRRL B-441</strain>
    </source>
</reference>
<name>RL28_LACP3</name>
<organism>
    <name type="scientific">Lacticaseibacillus paracasei (strain ATCC 334 / BCRC 17002 / CCUG 31169 / CIP 107868 / KCTC 3260 / NRRL B-441)</name>
    <name type="common">Lactobacillus paracasei</name>
    <dbReference type="NCBI Taxonomy" id="321967"/>
    <lineage>
        <taxon>Bacteria</taxon>
        <taxon>Bacillati</taxon>
        <taxon>Bacillota</taxon>
        <taxon>Bacilli</taxon>
        <taxon>Lactobacillales</taxon>
        <taxon>Lactobacillaceae</taxon>
        <taxon>Lacticaseibacillus</taxon>
    </lineage>
</organism>
<evidence type="ECO:0000255" key="1">
    <source>
        <dbReference type="HAMAP-Rule" id="MF_00373"/>
    </source>
</evidence>
<evidence type="ECO:0000305" key="2"/>
<sequence length="61" mass="6977">MAKDIITGRHTTFGNKRSHALNSSRRQWKANLHKVRILVDGKPKRVWVSARALKSGKLTRV</sequence>
<protein>
    <recommendedName>
        <fullName evidence="1">Large ribosomal subunit protein bL28</fullName>
    </recommendedName>
    <alternativeName>
        <fullName evidence="2">50S ribosomal protein L28</fullName>
    </alternativeName>
</protein>
<dbReference type="EMBL" id="CP000423">
    <property type="protein sequence ID" value="ABJ70392.1"/>
    <property type="molecule type" value="Genomic_DNA"/>
</dbReference>
<dbReference type="RefSeq" id="WP_003564715.1">
    <property type="nucleotide sequence ID" value="NC_008526.1"/>
</dbReference>
<dbReference type="RefSeq" id="YP_806834.1">
    <property type="nucleotide sequence ID" value="NC_008526.1"/>
</dbReference>
<dbReference type="SMR" id="Q038I0"/>
<dbReference type="STRING" id="321967.LSEI_1618"/>
<dbReference type="PaxDb" id="321967-LSEI_1618"/>
<dbReference type="GeneID" id="57090323"/>
<dbReference type="KEGG" id="lca:LSEI_1618"/>
<dbReference type="PATRIC" id="fig|321967.11.peg.1599"/>
<dbReference type="HOGENOM" id="CLU_064548_7_1_9"/>
<dbReference type="Proteomes" id="UP000001651">
    <property type="component" value="Chromosome"/>
</dbReference>
<dbReference type="GO" id="GO:1990904">
    <property type="term" value="C:ribonucleoprotein complex"/>
    <property type="evidence" value="ECO:0007669"/>
    <property type="project" value="UniProtKB-KW"/>
</dbReference>
<dbReference type="GO" id="GO:0005840">
    <property type="term" value="C:ribosome"/>
    <property type="evidence" value="ECO:0007669"/>
    <property type="project" value="UniProtKB-KW"/>
</dbReference>
<dbReference type="GO" id="GO:0003735">
    <property type="term" value="F:structural constituent of ribosome"/>
    <property type="evidence" value="ECO:0007669"/>
    <property type="project" value="InterPro"/>
</dbReference>
<dbReference type="GO" id="GO:0006412">
    <property type="term" value="P:translation"/>
    <property type="evidence" value="ECO:0007669"/>
    <property type="project" value="UniProtKB-UniRule"/>
</dbReference>
<dbReference type="Gene3D" id="2.30.170.40">
    <property type="entry name" value="Ribosomal protein L28/L24"/>
    <property type="match status" value="1"/>
</dbReference>
<dbReference type="HAMAP" id="MF_00373">
    <property type="entry name" value="Ribosomal_bL28"/>
    <property type="match status" value="1"/>
</dbReference>
<dbReference type="InterPro" id="IPR050096">
    <property type="entry name" value="Bacterial_rp_bL28"/>
</dbReference>
<dbReference type="InterPro" id="IPR026569">
    <property type="entry name" value="Ribosomal_bL28"/>
</dbReference>
<dbReference type="InterPro" id="IPR034704">
    <property type="entry name" value="Ribosomal_bL28/bL31-like_sf"/>
</dbReference>
<dbReference type="InterPro" id="IPR001383">
    <property type="entry name" value="Ribosomal_bL28_bact-type"/>
</dbReference>
<dbReference type="InterPro" id="IPR037147">
    <property type="entry name" value="Ribosomal_bL28_sf"/>
</dbReference>
<dbReference type="NCBIfam" id="TIGR00009">
    <property type="entry name" value="L28"/>
    <property type="match status" value="1"/>
</dbReference>
<dbReference type="PANTHER" id="PTHR39080">
    <property type="entry name" value="50S RIBOSOMAL PROTEIN L28"/>
    <property type="match status" value="1"/>
</dbReference>
<dbReference type="PANTHER" id="PTHR39080:SF1">
    <property type="entry name" value="LARGE RIBOSOMAL SUBUNIT PROTEIN BL28A"/>
    <property type="match status" value="1"/>
</dbReference>
<dbReference type="Pfam" id="PF00830">
    <property type="entry name" value="Ribosomal_L28"/>
    <property type="match status" value="1"/>
</dbReference>
<dbReference type="SUPFAM" id="SSF143800">
    <property type="entry name" value="L28p-like"/>
    <property type="match status" value="1"/>
</dbReference>
<proteinExistence type="inferred from homology"/>
<gene>
    <name evidence="1" type="primary">rpmB</name>
    <name type="ordered locus">LSEI_1618</name>
</gene>
<feature type="chain" id="PRO_1000007259" description="Large ribosomal subunit protein bL28">
    <location>
        <begin position="1"/>
        <end position="61"/>
    </location>
</feature>
<keyword id="KW-1185">Reference proteome</keyword>
<keyword id="KW-0687">Ribonucleoprotein</keyword>
<keyword id="KW-0689">Ribosomal protein</keyword>
<accession>Q038I0</accession>